<name>RNY_FLAPJ</name>
<organism>
    <name type="scientific">Flavobacterium psychrophilum (strain ATCC 49511 / DSM 21280 / CIP 103535 / JIP02/86)</name>
    <dbReference type="NCBI Taxonomy" id="402612"/>
    <lineage>
        <taxon>Bacteria</taxon>
        <taxon>Pseudomonadati</taxon>
        <taxon>Bacteroidota</taxon>
        <taxon>Flavobacteriia</taxon>
        <taxon>Flavobacteriales</taxon>
        <taxon>Flavobacteriaceae</taxon>
        <taxon>Flavobacterium</taxon>
    </lineage>
</organism>
<sequence>MDIITIIIAVIAGIGGGFGISKFLEKSGVSNLIKNAKKEASSILKDANLEGENIKKDKILQAKEKFIELKSEHEQVILTRDRKVAEVEKRVRDKESQVSGELSKAKKINDDFEAKTNEYNTKLENLEKKQVEVEKMHKSQLQQLEVISGLSTEEAKNQLIEGLKSEAKTQAMAHIQETIEEAKLTAQQEAKKIIISTIQRVGTEEAVENCVSVFNIESDDVKGRIIGREGRNIRAIEAATGVEIIVDDTPEAIILSCFDPVRREIARLALHKLVTDGRIHPARIEEVVAKTTKQIDDEIIEVGKRTVIDLGIHGLHPELIKVVGRMKYRSSYGQNLLQHSREVSKLCGIMAAELGLNVKLAKRAGLLHDIGKVPDAESDLPHALLGMQWAEKYGEKEEVCNAIGAHHDEIEMKSLLSPIVQVCDAISGARPGARRQVLDSYIQRLKDLEEVAYGFNGVKSAYAIQAGRELRVIVESEKVSDDNASNLSFEISQKIQTEMTYPGQVKVTVIRETRAVNIAK</sequence>
<reference key="1">
    <citation type="journal article" date="2007" name="Nat. Biotechnol.">
        <title>Complete genome sequence of the fish pathogen Flavobacterium psychrophilum.</title>
        <authorList>
            <person name="Duchaud E."/>
            <person name="Boussaha M."/>
            <person name="Loux V."/>
            <person name="Bernardet J.-F."/>
            <person name="Michel C."/>
            <person name="Kerouault B."/>
            <person name="Mondot S."/>
            <person name="Nicolas P."/>
            <person name="Bossy R."/>
            <person name="Caron C."/>
            <person name="Bessieres P."/>
            <person name="Gibrat J.-F."/>
            <person name="Claverol S."/>
            <person name="Dumetz F."/>
            <person name="Le Henaff M."/>
            <person name="Benmansour A."/>
        </authorList>
    </citation>
    <scope>NUCLEOTIDE SEQUENCE [LARGE SCALE GENOMIC DNA]</scope>
    <source>
        <strain>ATCC 49511 / DSM 21280 / CIP 103535 / JIP02/86</strain>
    </source>
</reference>
<accession>A6GYR0</accession>
<feature type="chain" id="PRO_0000344875" description="Ribonuclease Y">
    <location>
        <begin position="1"/>
        <end position="520"/>
    </location>
</feature>
<feature type="transmembrane region" description="Helical" evidence="1">
    <location>
        <begin position="1"/>
        <end position="21"/>
    </location>
</feature>
<feature type="domain" description="KH" evidence="1">
    <location>
        <begin position="210"/>
        <end position="276"/>
    </location>
</feature>
<feature type="domain" description="HD" evidence="2">
    <location>
        <begin position="336"/>
        <end position="429"/>
    </location>
</feature>
<gene>
    <name evidence="1" type="primary">rny</name>
    <name type="ordered locus">FP1146</name>
</gene>
<comment type="function">
    <text evidence="1">Endoribonuclease that initiates mRNA decay.</text>
</comment>
<comment type="subcellular location">
    <subcellularLocation>
        <location evidence="1">Cell membrane</location>
        <topology evidence="1">Single-pass membrane protein</topology>
    </subcellularLocation>
</comment>
<comment type="similarity">
    <text evidence="1">Belongs to the RNase Y family.</text>
</comment>
<proteinExistence type="inferred from homology"/>
<evidence type="ECO:0000255" key="1">
    <source>
        <dbReference type="HAMAP-Rule" id="MF_00335"/>
    </source>
</evidence>
<evidence type="ECO:0000255" key="2">
    <source>
        <dbReference type="PROSITE-ProRule" id="PRU01175"/>
    </source>
</evidence>
<keyword id="KW-1003">Cell membrane</keyword>
<keyword id="KW-0255">Endonuclease</keyword>
<keyword id="KW-0378">Hydrolase</keyword>
<keyword id="KW-0472">Membrane</keyword>
<keyword id="KW-0540">Nuclease</keyword>
<keyword id="KW-1185">Reference proteome</keyword>
<keyword id="KW-0694">RNA-binding</keyword>
<keyword id="KW-0812">Transmembrane</keyword>
<keyword id="KW-1133">Transmembrane helix</keyword>
<protein>
    <recommendedName>
        <fullName evidence="1">Ribonuclease Y</fullName>
        <shortName evidence="1">RNase Y</shortName>
        <ecNumber evidence="1">3.1.-.-</ecNumber>
    </recommendedName>
</protein>
<dbReference type="EC" id="3.1.-.-" evidence="1"/>
<dbReference type="EMBL" id="AM398681">
    <property type="protein sequence ID" value="CAL43233.1"/>
    <property type="molecule type" value="Genomic_DNA"/>
</dbReference>
<dbReference type="RefSeq" id="WP_011963284.1">
    <property type="nucleotide sequence ID" value="NC_009613.3"/>
</dbReference>
<dbReference type="RefSeq" id="YP_001296044.1">
    <property type="nucleotide sequence ID" value="NC_009613.3"/>
</dbReference>
<dbReference type="SMR" id="A6GYR0"/>
<dbReference type="STRING" id="402612.FP1146"/>
<dbReference type="EnsemblBacteria" id="CAL43233">
    <property type="protein sequence ID" value="CAL43233"/>
    <property type="gene ID" value="FP1146"/>
</dbReference>
<dbReference type="GeneID" id="66553050"/>
<dbReference type="KEGG" id="fps:FP1146"/>
<dbReference type="PATRIC" id="fig|402612.5.peg.1158"/>
<dbReference type="eggNOG" id="COG1418">
    <property type="taxonomic scope" value="Bacteria"/>
</dbReference>
<dbReference type="HOGENOM" id="CLU_028328_1_0_10"/>
<dbReference type="OrthoDB" id="9803205at2"/>
<dbReference type="Proteomes" id="UP000006394">
    <property type="component" value="Chromosome"/>
</dbReference>
<dbReference type="GO" id="GO:0005886">
    <property type="term" value="C:plasma membrane"/>
    <property type="evidence" value="ECO:0007669"/>
    <property type="project" value="UniProtKB-SubCell"/>
</dbReference>
<dbReference type="GO" id="GO:0003723">
    <property type="term" value="F:RNA binding"/>
    <property type="evidence" value="ECO:0007669"/>
    <property type="project" value="UniProtKB-UniRule"/>
</dbReference>
<dbReference type="GO" id="GO:0004521">
    <property type="term" value="F:RNA endonuclease activity"/>
    <property type="evidence" value="ECO:0007669"/>
    <property type="project" value="UniProtKB-UniRule"/>
</dbReference>
<dbReference type="GO" id="GO:0006402">
    <property type="term" value="P:mRNA catabolic process"/>
    <property type="evidence" value="ECO:0007669"/>
    <property type="project" value="UniProtKB-UniRule"/>
</dbReference>
<dbReference type="CDD" id="cd00077">
    <property type="entry name" value="HDc"/>
    <property type="match status" value="1"/>
</dbReference>
<dbReference type="CDD" id="cd22431">
    <property type="entry name" value="KH-I_RNaseY"/>
    <property type="match status" value="1"/>
</dbReference>
<dbReference type="FunFam" id="1.10.3210.10:FF:000013">
    <property type="entry name" value="Ribonuclease Y"/>
    <property type="match status" value="1"/>
</dbReference>
<dbReference type="Gene3D" id="1.10.3210.10">
    <property type="entry name" value="Hypothetical protein af1432"/>
    <property type="match status" value="1"/>
</dbReference>
<dbReference type="Gene3D" id="3.30.1370.10">
    <property type="entry name" value="K Homology domain, type 1"/>
    <property type="match status" value="1"/>
</dbReference>
<dbReference type="HAMAP" id="MF_00335">
    <property type="entry name" value="RNase_Y"/>
    <property type="match status" value="1"/>
</dbReference>
<dbReference type="InterPro" id="IPR003607">
    <property type="entry name" value="HD/PDEase_dom"/>
</dbReference>
<dbReference type="InterPro" id="IPR006674">
    <property type="entry name" value="HD_domain"/>
</dbReference>
<dbReference type="InterPro" id="IPR006675">
    <property type="entry name" value="HDIG_dom"/>
</dbReference>
<dbReference type="InterPro" id="IPR004087">
    <property type="entry name" value="KH_dom"/>
</dbReference>
<dbReference type="InterPro" id="IPR004088">
    <property type="entry name" value="KH_dom_type_1"/>
</dbReference>
<dbReference type="InterPro" id="IPR036612">
    <property type="entry name" value="KH_dom_type_1_sf"/>
</dbReference>
<dbReference type="InterPro" id="IPR017705">
    <property type="entry name" value="Ribonuclease_Y"/>
</dbReference>
<dbReference type="InterPro" id="IPR022711">
    <property type="entry name" value="RNase_Y_N"/>
</dbReference>
<dbReference type="NCBIfam" id="TIGR00277">
    <property type="entry name" value="HDIG"/>
    <property type="match status" value="1"/>
</dbReference>
<dbReference type="NCBIfam" id="TIGR03319">
    <property type="entry name" value="RNase_Y"/>
    <property type="match status" value="1"/>
</dbReference>
<dbReference type="PANTHER" id="PTHR12826">
    <property type="entry name" value="RIBONUCLEASE Y"/>
    <property type="match status" value="1"/>
</dbReference>
<dbReference type="PANTHER" id="PTHR12826:SF15">
    <property type="entry name" value="RIBONUCLEASE Y"/>
    <property type="match status" value="1"/>
</dbReference>
<dbReference type="Pfam" id="PF01966">
    <property type="entry name" value="HD"/>
    <property type="match status" value="1"/>
</dbReference>
<dbReference type="Pfam" id="PF00013">
    <property type="entry name" value="KH_1"/>
    <property type="match status" value="1"/>
</dbReference>
<dbReference type="Pfam" id="PF12072">
    <property type="entry name" value="RNase_Y_N"/>
    <property type="match status" value="1"/>
</dbReference>
<dbReference type="SMART" id="SM00471">
    <property type="entry name" value="HDc"/>
    <property type="match status" value="1"/>
</dbReference>
<dbReference type="SMART" id="SM00322">
    <property type="entry name" value="KH"/>
    <property type="match status" value="1"/>
</dbReference>
<dbReference type="SUPFAM" id="SSF54791">
    <property type="entry name" value="Eukaryotic type KH-domain (KH-domain type I)"/>
    <property type="match status" value="1"/>
</dbReference>
<dbReference type="SUPFAM" id="SSF109604">
    <property type="entry name" value="HD-domain/PDEase-like"/>
    <property type="match status" value="1"/>
</dbReference>
<dbReference type="PROSITE" id="PS51831">
    <property type="entry name" value="HD"/>
    <property type="match status" value="1"/>
</dbReference>
<dbReference type="PROSITE" id="PS50084">
    <property type="entry name" value="KH_TYPE_1"/>
    <property type="match status" value="1"/>
</dbReference>